<name>RL19_GLOC7</name>
<feature type="chain" id="PRO_1000193819" description="Large ribosomal subunit protein bL19">
    <location>
        <begin position="1"/>
        <end position="120"/>
    </location>
</feature>
<keyword id="KW-1185">Reference proteome</keyword>
<keyword id="KW-0687">Ribonucleoprotein</keyword>
<keyword id="KW-0689">Ribosomal protein</keyword>
<gene>
    <name evidence="1" type="primary">rplS</name>
    <name evidence="1" type="synonym">rpl19</name>
    <name type="ordered locus">PCC7424_1023</name>
</gene>
<accession>B7KJM8</accession>
<evidence type="ECO:0000255" key="1">
    <source>
        <dbReference type="HAMAP-Rule" id="MF_00402"/>
    </source>
</evidence>
<evidence type="ECO:0000305" key="2"/>
<proteinExistence type="inferred from homology"/>
<comment type="function">
    <text evidence="1">This protein is located at the 30S-50S ribosomal subunit interface and may play a role in the structure and function of the aminoacyl-tRNA binding site.</text>
</comment>
<comment type="similarity">
    <text evidence="1">Belongs to the bacterial ribosomal protein bL19 family.</text>
</comment>
<dbReference type="EMBL" id="CP001291">
    <property type="protein sequence ID" value="ACK69477.1"/>
    <property type="molecule type" value="Genomic_DNA"/>
</dbReference>
<dbReference type="RefSeq" id="WP_012598424.1">
    <property type="nucleotide sequence ID" value="NC_011729.1"/>
</dbReference>
<dbReference type="SMR" id="B7KJM8"/>
<dbReference type="STRING" id="65393.PCC7424_1023"/>
<dbReference type="KEGG" id="cyc:PCC7424_1023"/>
<dbReference type="eggNOG" id="COG0335">
    <property type="taxonomic scope" value="Bacteria"/>
</dbReference>
<dbReference type="HOGENOM" id="CLU_103507_2_0_3"/>
<dbReference type="OrthoDB" id="9803541at2"/>
<dbReference type="Proteomes" id="UP000002384">
    <property type="component" value="Chromosome"/>
</dbReference>
<dbReference type="GO" id="GO:0022625">
    <property type="term" value="C:cytosolic large ribosomal subunit"/>
    <property type="evidence" value="ECO:0007669"/>
    <property type="project" value="TreeGrafter"/>
</dbReference>
<dbReference type="GO" id="GO:0003735">
    <property type="term" value="F:structural constituent of ribosome"/>
    <property type="evidence" value="ECO:0007669"/>
    <property type="project" value="InterPro"/>
</dbReference>
<dbReference type="GO" id="GO:0006412">
    <property type="term" value="P:translation"/>
    <property type="evidence" value="ECO:0007669"/>
    <property type="project" value="UniProtKB-UniRule"/>
</dbReference>
<dbReference type="FunFam" id="2.30.30.790:FF:000001">
    <property type="entry name" value="50S ribosomal protein L19"/>
    <property type="match status" value="1"/>
</dbReference>
<dbReference type="Gene3D" id="2.30.30.790">
    <property type="match status" value="1"/>
</dbReference>
<dbReference type="HAMAP" id="MF_00402">
    <property type="entry name" value="Ribosomal_bL19"/>
    <property type="match status" value="1"/>
</dbReference>
<dbReference type="InterPro" id="IPR001857">
    <property type="entry name" value="Ribosomal_bL19"/>
</dbReference>
<dbReference type="InterPro" id="IPR018257">
    <property type="entry name" value="Ribosomal_bL19_CS"/>
</dbReference>
<dbReference type="InterPro" id="IPR038657">
    <property type="entry name" value="Ribosomal_bL19_sf"/>
</dbReference>
<dbReference type="InterPro" id="IPR008991">
    <property type="entry name" value="Translation_prot_SH3-like_sf"/>
</dbReference>
<dbReference type="NCBIfam" id="TIGR01024">
    <property type="entry name" value="rplS_bact"/>
    <property type="match status" value="1"/>
</dbReference>
<dbReference type="PANTHER" id="PTHR15680:SF9">
    <property type="entry name" value="LARGE RIBOSOMAL SUBUNIT PROTEIN BL19M"/>
    <property type="match status" value="1"/>
</dbReference>
<dbReference type="PANTHER" id="PTHR15680">
    <property type="entry name" value="RIBOSOMAL PROTEIN L19"/>
    <property type="match status" value="1"/>
</dbReference>
<dbReference type="Pfam" id="PF01245">
    <property type="entry name" value="Ribosomal_L19"/>
    <property type="match status" value="1"/>
</dbReference>
<dbReference type="PIRSF" id="PIRSF002191">
    <property type="entry name" value="Ribosomal_L19"/>
    <property type="match status" value="1"/>
</dbReference>
<dbReference type="PRINTS" id="PR00061">
    <property type="entry name" value="RIBOSOMALL19"/>
</dbReference>
<dbReference type="SUPFAM" id="SSF50104">
    <property type="entry name" value="Translation proteins SH3-like domain"/>
    <property type="match status" value="1"/>
</dbReference>
<dbReference type="PROSITE" id="PS01015">
    <property type="entry name" value="RIBOSOMAL_L19"/>
    <property type="match status" value="1"/>
</dbReference>
<reference key="1">
    <citation type="journal article" date="2011" name="MBio">
        <title>Novel metabolic attributes of the genus Cyanothece, comprising a group of unicellular nitrogen-fixing Cyanobacteria.</title>
        <authorList>
            <person name="Bandyopadhyay A."/>
            <person name="Elvitigala T."/>
            <person name="Welsh E."/>
            <person name="Stockel J."/>
            <person name="Liberton M."/>
            <person name="Min H."/>
            <person name="Sherman L.A."/>
            <person name="Pakrasi H.B."/>
        </authorList>
    </citation>
    <scope>NUCLEOTIDE SEQUENCE [LARGE SCALE GENOMIC DNA]</scope>
    <source>
        <strain>PCC 7424</strain>
    </source>
</reference>
<protein>
    <recommendedName>
        <fullName evidence="1">Large ribosomal subunit protein bL19</fullName>
    </recommendedName>
    <alternativeName>
        <fullName evidence="2">50S ribosomal protein L19</fullName>
    </alternativeName>
</protein>
<sequence>MNAEQIIKSIEAEHLKPNLPVIHVGDTVRVGVRIIEGGKERVQPYEGTIIAMGNSGINKTITVRRVFQGVGVERVFLLHSPRIANIQVIRRGKVRRAKLYYLRDRVGKATRIQQRFDRPL</sequence>
<organism>
    <name type="scientific">Gloeothece citriformis (strain PCC 7424)</name>
    <name type="common">Cyanothece sp. (strain PCC 7424)</name>
    <dbReference type="NCBI Taxonomy" id="65393"/>
    <lineage>
        <taxon>Bacteria</taxon>
        <taxon>Bacillati</taxon>
        <taxon>Cyanobacteriota</taxon>
        <taxon>Cyanophyceae</taxon>
        <taxon>Oscillatoriophycideae</taxon>
        <taxon>Chroococcales</taxon>
        <taxon>Aphanothecaceae</taxon>
        <taxon>Gloeothece</taxon>
        <taxon>Gloeothece citriformis</taxon>
    </lineage>
</organism>